<protein>
    <recommendedName>
        <fullName evidence="3">Immunoglobulin heavy variable 1-84</fullName>
    </recommendedName>
    <alternativeName>
        <fullName evidence="2">Ig heavy chain V region VH558 A1/A4</fullName>
    </alternativeName>
</protein>
<keyword id="KW-1064">Adaptive immunity</keyword>
<keyword id="KW-1015">Disulfide bond</keyword>
<keyword id="KW-0391">Immunity</keyword>
<keyword id="KW-1280">Immunoglobulin</keyword>
<keyword id="KW-0393">Immunoglobulin domain</keyword>
<keyword id="KW-1185">Reference proteome</keyword>
<keyword id="KW-0732">Signal</keyword>
<sequence length="117" mass="12967">MGWSWIFLFLLSGTAGVHCQIQLQQSGPELVKPGASVKISCKASGYTFTDYYINWVKQRPGQGLEWIGWIYPGSGNTKYNEKFKGKATLTVDTSSSTAYMQLSSLTSEDSAVYFCAR</sequence>
<accession>P06327</accession>
<accession>A0A075B5Y5</accession>
<evidence type="ECO:0000255" key="1">
    <source>
        <dbReference type="PROSITE-ProRule" id="PRU00114"/>
    </source>
</evidence>
<evidence type="ECO:0000305" key="2"/>
<evidence type="ECO:0000312" key="3">
    <source>
        <dbReference type="MGI" id="MGI:3644235"/>
    </source>
</evidence>
<reference key="1">
    <citation type="journal article" date="1985" name="Cell">
        <title>Developmentally controlled and tissue-specific expression of unrearranged VH gene segments.</title>
        <authorList>
            <person name="Yancopoulos G.D."/>
            <person name="Alt F.W."/>
        </authorList>
    </citation>
    <scope>NUCLEOTIDE SEQUENCE [MRNA]</scope>
</reference>
<reference key="2">
    <citation type="journal article" date="2009" name="PLoS Biol.">
        <title>Lineage-specific biology revealed by a finished genome assembly of the mouse.</title>
        <authorList>
            <person name="Church D.M."/>
            <person name="Goodstadt L."/>
            <person name="Hillier L.W."/>
            <person name="Zody M.C."/>
            <person name="Goldstein S."/>
            <person name="She X."/>
            <person name="Bult C.J."/>
            <person name="Agarwala R."/>
            <person name="Cherry J.L."/>
            <person name="DiCuccio M."/>
            <person name="Hlavina W."/>
            <person name="Kapustin Y."/>
            <person name="Meric P."/>
            <person name="Maglott D."/>
            <person name="Birtle Z."/>
            <person name="Marques A.C."/>
            <person name="Graves T."/>
            <person name="Zhou S."/>
            <person name="Teague B."/>
            <person name="Potamousis K."/>
            <person name="Churas C."/>
            <person name="Place M."/>
            <person name="Herschleb J."/>
            <person name="Runnheim R."/>
            <person name="Forrest D."/>
            <person name="Amos-Landgraf J."/>
            <person name="Schwartz D.C."/>
            <person name="Cheng Z."/>
            <person name="Lindblad-Toh K."/>
            <person name="Eichler E.E."/>
            <person name="Ponting C.P."/>
        </authorList>
    </citation>
    <scope>NUCLEOTIDE SEQUENCE [LARGE SCALE GENOMIC DNA]</scope>
    <source>
        <strain>C57BL/6J</strain>
    </source>
</reference>
<reference key="3">
    <citation type="journal article" date="2011" name="PLoS Biol.">
        <title>Modernizing reference genome assemblies.</title>
        <authorList>
            <person name="Church D.M."/>
            <person name="Schneider V.A."/>
            <person name="Graves T."/>
            <person name="Auger K."/>
            <person name="Cunningham F."/>
            <person name="Bouk N."/>
            <person name="Chen H.C."/>
            <person name="Agarwala R."/>
            <person name="McLaren W.M."/>
            <person name="Ritchie G.R."/>
            <person name="Albracht D."/>
            <person name="Kremitzki M."/>
            <person name="Rock S."/>
            <person name="Kotkiewicz H."/>
            <person name="Kremitzki C."/>
            <person name="Wollam A."/>
            <person name="Trani L."/>
            <person name="Fulton L."/>
            <person name="Fulton R."/>
            <person name="Matthews L."/>
            <person name="Whitehead S."/>
            <person name="Chow W."/>
            <person name="Torrance J."/>
            <person name="Dunn M."/>
            <person name="Harden G."/>
            <person name="Threadgold G."/>
            <person name="Wood J."/>
            <person name="Collins J."/>
            <person name="Heath P."/>
            <person name="Griffiths G."/>
            <person name="Pelan S."/>
            <person name="Grafham D."/>
            <person name="Eichler E.E."/>
            <person name="Weinstock G."/>
            <person name="Mardis E.R."/>
            <person name="Wilson R.K."/>
            <person name="Howe K."/>
            <person name="Flicek P."/>
            <person name="Hubbard T."/>
        </authorList>
    </citation>
    <scope>NUCLEOTIDE SEQUENCE [LARGE SCALE GENOMIC DNA]</scope>
    <source>
        <strain>C57BL/6J</strain>
    </source>
</reference>
<proteinExistence type="predicted"/>
<organism>
    <name type="scientific">Mus musculus</name>
    <name type="common">Mouse</name>
    <dbReference type="NCBI Taxonomy" id="10090"/>
    <lineage>
        <taxon>Eukaryota</taxon>
        <taxon>Metazoa</taxon>
        <taxon>Chordata</taxon>
        <taxon>Craniata</taxon>
        <taxon>Vertebrata</taxon>
        <taxon>Euteleostomi</taxon>
        <taxon>Mammalia</taxon>
        <taxon>Eutheria</taxon>
        <taxon>Euarchontoglires</taxon>
        <taxon>Glires</taxon>
        <taxon>Rodentia</taxon>
        <taxon>Myomorpha</taxon>
        <taxon>Muroidea</taxon>
        <taxon>Muridae</taxon>
        <taxon>Murinae</taxon>
        <taxon>Mus</taxon>
        <taxon>Mus</taxon>
    </lineage>
</organism>
<dbReference type="EMBL" id="M13787">
    <property type="protein sequence ID" value="AAA38499.1"/>
    <property type="molecule type" value="mRNA"/>
</dbReference>
<dbReference type="PIR" id="A02029">
    <property type="entry name" value="HVMSA1"/>
</dbReference>
<dbReference type="EMDB" id="EMD-25487"/>
<dbReference type="EMDB" id="EMD-25488"/>
<dbReference type="EMDB" id="EMD-31045"/>
<dbReference type="EMDB" id="EMD-31046"/>
<dbReference type="EMDB" id="EMD-34231"/>
<dbReference type="EMDB" id="EMD-34232"/>
<dbReference type="EMDB" id="EMD-34233"/>
<dbReference type="EMDB" id="EMD-34234"/>
<dbReference type="SMR" id="P06327"/>
<dbReference type="FunCoup" id="P06327">
    <property type="interactions" value="576"/>
</dbReference>
<dbReference type="Ensembl" id="ENSMUST00000103551.2">
    <property type="protein sequence ID" value="ENSMUSP00000100332.2"/>
    <property type="gene ID" value="ENSMUSG00000094940.2"/>
</dbReference>
<dbReference type="AGR" id="MGI:3644235"/>
<dbReference type="MGI" id="MGI:3644235">
    <property type="gene designation" value="Ighv1-84"/>
</dbReference>
<dbReference type="VEuPathDB" id="HostDB:ENSMUSG00000094940"/>
<dbReference type="GeneTree" id="ENSGT00950000183013"/>
<dbReference type="HOGENOM" id="CLU_077975_5_2_1"/>
<dbReference type="InParanoid" id="P06327"/>
<dbReference type="OMA" id="IEWIGWI"/>
<dbReference type="OrthoDB" id="8865476at2759"/>
<dbReference type="PhylomeDB" id="P06327"/>
<dbReference type="PRO" id="PR:P06327"/>
<dbReference type="Proteomes" id="UP000000589">
    <property type="component" value="Chromosome 12"/>
</dbReference>
<dbReference type="RNAct" id="P06327">
    <property type="molecule type" value="protein"/>
</dbReference>
<dbReference type="Bgee" id="ENSMUSG00000094940">
    <property type="expression patterns" value="Expressed in spermatid and 17 other cell types or tissues"/>
</dbReference>
<dbReference type="GO" id="GO:0005576">
    <property type="term" value="C:extracellular region"/>
    <property type="evidence" value="ECO:0007669"/>
    <property type="project" value="UniProtKB-ARBA"/>
</dbReference>
<dbReference type="GO" id="GO:0019814">
    <property type="term" value="C:immunoglobulin complex"/>
    <property type="evidence" value="ECO:0007669"/>
    <property type="project" value="UniProtKB-KW"/>
</dbReference>
<dbReference type="GO" id="GO:0002250">
    <property type="term" value="P:adaptive immune response"/>
    <property type="evidence" value="ECO:0007669"/>
    <property type="project" value="UniProtKB-KW"/>
</dbReference>
<dbReference type="CDD" id="cd04981">
    <property type="entry name" value="IgV_H"/>
    <property type="match status" value="1"/>
</dbReference>
<dbReference type="FunFam" id="2.60.40.10:FF:001025">
    <property type="entry name" value="Immunoglobulin heavy variable V1-74"/>
    <property type="match status" value="1"/>
</dbReference>
<dbReference type="Gene3D" id="2.60.40.10">
    <property type="entry name" value="Immunoglobulins"/>
    <property type="match status" value="1"/>
</dbReference>
<dbReference type="InterPro" id="IPR007110">
    <property type="entry name" value="Ig-like_dom"/>
</dbReference>
<dbReference type="InterPro" id="IPR036179">
    <property type="entry name" value="Ig-like_dom_sf"/>
</dbReference>
<dbReference type="InterPro" id="IPR013783">
    <property type="entry name" value="Ig-like_fold"/>
</dbReference>
<dbReference type="InterPro" id="IPR013106">
    <property type="entry name" value="Ig_V-set"/>
</dbReference>
<dbReference type="InterPro" id="IPR050199">
    <property type="entry name" value="IgHV"/>
</dbReference>
<dbReference type="PANTHER" id="PTHR23266">
    <property type="entry name" value="IMMUNOGLOBULIN HEAVY CHAIN"/>
    <property type="match status" value="1"/>
</dbReference>
<dbReference type="Pfam" id="PF07686">
    <property type="entry name" value="V-set"/>
    <property type="match status" value="1"/>
</dbReference>
<dbReference type="SMART" id="SM00406">
    <property type="entry name" value="IGv"/>
    <property type="match status" value="1"/>
</dbReference>
<dbReference type="SUPFAM" id="SSF48726">
    <property type="entry name" value="Immunoglobulin"/>
    <property type="match status" value="1"/>
</dbReference>
<dbReference type="PROSITE" id="PS50835">
    <property type="entry name" value="IG_LIKE"/>
    <property type="match status" value="1"/>
</dbReference>
<name>HVM52_MOUSE</name>
<feature type="signal peptide">
    <location>
        <begin position="1"/>
        <end position="19"/>
    </location>
</feature>
<feature type="chain" id="PRO_0000015235" description="Immunoglobulin heavy variable 1-84">
    <location>
        <begin position="20"/>
        <end position="117"/>
    </location>
</feature>
<feature type="domain" description="Ig-like" evidence="1">
    <location>
        <begin position="31"/>
        <end position="117"/>
    </location>
</feature>
<feature type="region of interest" description="Framework-1">
    <location>
        <begin position="20"/>
        <end position="49"/>
    </location>
</feature>
<feature type="region of interest" description="Complementarity-determining-1">
    <location>
        <begin position="50"/>
        <end position="54"/>
    </location>
</feature>
<feature type="region of interest" description="Framework-2">
    <location>
        <begin position="55"/>
        <end position="68"/>
    </location>
</feature>
<feature type="region of interest" description="Complementarity-determining-2">
    <location>
        <begin position="69"/>
        <end position="85"/>
    </location>
</feature>
<feature type="region of interest" description="Framework-3">
    <location>
        <begin position="86"/>
        <end position="117"/>
    </location>
</feature>
<feature type="disulfide bond" evidence="1">
    <location>
        <begin position="41"/>
        <end position="115"/>
    </location>
</feature>
<feature type="sequence conflict" description="In Ref. 1; AAA38499." evidence="2" ref="1">
    <original>S</original>
    <variation>R</variation>
    <location>
        <position position="4"/>
    </location>
</feature>
<feature type="sequence conflict" description="In Ref. 1; AAA38499." evidence="2" ref="1">
    <original>I</original>
    <variation>V</variation>
    <location>
        <position position="21"/>
    </location>
</feature>
<feature type="sequence conflict" description="In Ref. 1; AAA38499." evidence="2" ref="1">
    <original>S</original>
    <variation>L</variation>
    <location>
        <position position="36"/>
    </location>
</feature>
<feature type="sequence conflict" description="In Ref. 1; AAA38499." evidence="2" ref="1">
    <original>DYY</original>
    <variation>SYD</variation>
    <location>
        <begin position="50"/>
        <end position="52"/>
    </location>
</feature>
<feature type="sequence conflict" description="In Ref. 1; AAA38499." evidence="2" ref="1">
    <original>SGN</original>
    <variation>DGS</variation>
    <location>
        <begin position="74"/>
        <end position="76"/>
    </location>
</feature>
<feature type="sequence conflict" description="In Ref. 1; AAA38499." evidence="2" ref="1">
    <original>VDT</original>
    <variation>ADK</variation>
    <location>
        <begin position="91"/>
        <end position="93"/>
    </location>
</feature>
<feature type="sequence conflict" description="In Ref. 1; AAA38499." evidence="2" ref="1">
    <original>D</original>
    <variation>N</variation>
    <location>
        <position position="109"/>
    </location>
</feature>
<gene>
    <name evidence="3" type="primary">Ighv1-84</name>
    <name evidence="2" type="synonym">Gm5629</name>
</gene>